<organism>
    <name type="scientific">Shigella boydii serotype 4 (strain Sb227)</name>
    <dbReference type="NCBI Taxonomy" id="300268"/>
    <lineage>
        <taxon>Bacteria</taxon>
        <taxon>Pseudomonadati</taxon>
        <taxon>Pseudomonadota</taxon>
        <taxon>Gammaproteobacteria</taxon>
        <taxon>Enterobacterales</taxon>
        <taxon>Enterobacteriaceae</taxon>
        <taxon>Shigella</taxon>
    </lineage>
</organism>
<reference key="1">
    <citation type="journal article" date="2005" name="Nucleic Acids Res.">
        <title>Genome dynamics and diversity of Shigella species, the etiologic agents of bacillary dysentery.</title>
        <authorList>
            <person name="Yang F."/>
            <person name="Yang J."/>
            <person name="Zhang X."/>
            <person name="Chen L."/>
            <person name="Jiang Y."/>
            <person name="Yan Y."/>
            <person name="Tang X."/>
            <person name="Wang J."/>
            <person name="Xiong Z."/>
            <person name="Dong J."/>
            <person name="Xue Y."/>
            <person name="Zhu Y."/>
            <person name="Xu X."/>
            <person name="Sun L."/>
            <person name="Chen S."/>
            <person name="Nie H."/>
            <person name="Peng J."/>
            <person name="Xu J."/>
            <person name="Wang Y."/>
            <person name="Yuan Z."/>
            <person name="Wen Y."/>
            <person name="Yao Z."/>
            <person name="Shen Y."/>
            <person name="Qiang B."/>
            <person name="Hou Y."/>
            <person name="Yu J."/>
            <person name="Jin Q."/>
        </authorList>
    </citation>
    <scope>NUCLEOTIDE SEQUENCE [LARGE SCALE GENOMIC DNA]</scope>
    <source>
        <strain>Sb227</strain>
    </source>
</reference>
<gene>
    <name evidence="1" type="primary">dapA</name>
    <name type="ordered locus">SBO_2495</name>
</gene>
<name>DAPA_SHIBS</name>
<proteinExistence type="inferred from homology"/>
<evidence type="ECO:0000255" key="1">
    <source>
        <dbReference type="HAMAP-Rule" id="MF_00418"/>
    </source>
</evidence>
<evidence type="ECO:0000305" key="2"/>
<keyword id="KW-0028">Amino-acid biosynthesis</keyword>
<keyword id="KW-0963">Cytoplasm</keyword>
<keyword id="KW-0220">Diaminopimelate biosynthesis</keyword>
<keyword id="KW-0456">Lyase</keyword>
<keyword id="KW-0457">Lysine biosynthesis</keyword>
<keyword id="KW-0704">Schiff base</keyword>
<comment type="function">
    <text evidence="1">Catalyzes the condensation of (S)-aspartate-beta-semialdehyde [(S)-ASA] and pyruvate to 4-hydroxy-tetrahydrodipicolinate (HTPA).</text>
</comment>
<comment type="catalytic activity">
    <reaction evidence="1">
        <text>L-aspartate 4-semialdehyde + pyruvate = (2S,4S)-4-hydroxy-2,3,4,5-tetrahydrodipicolinate + H2O + H(+)</text>
        <dbReference type="Rhea" id="RHEA:34171"/>
        <dbReference type="ChEBI" id="CHEBI:15361"/>
        <dbReference type="ChEBI" id="CHEBI:15377"/>
        <dbReference type="ChEBI" id="CHEBI:15378"/>
        <dbReference type="ChEBI" id="CHEBI:67139"/>
        <dbReference type="ChEBI" id="CHEBI:537519"/>
        <dbReference type="EC" id="4.3.3.7"/>
    </reaction>
</comment>
<comment type="pathway">
    <text evidence="1">Amino-acid biosynthesis; L-lysine biosynthesis via DAP pathway; (S)-tetrahydrodipicolinate from L-aspartate: step 3/4.</text>
</comment>
<comment type="subunit">
    <text evidence="1">Homotetramer; dimer of dimers.</text>
</comment>
<comment type="subcellular location">
    <subcellularLocation>
        <location evidence="1">Cytoplasm</location>
    </subcellularLocation>
</comment>
<comment type="similarity">
    <text evidence="1">Belongs to the DapA family.</text>
</comment>
<comment type="caution">
    <text evidence="2">Was originally thought to be a dihydrodipicolinate synthase (DHDPS), catalyzing the condensation of (S)-aspartate-beta-semialdehyde [(S)-ASA] and pyruvate to dihydrodipicolinate (DHDP). However, it was shown in E.coli that the product of the enzymatic reaction is not dihydrodipicolinate but in fact (4S)-4-hydroxy-2,3,4,5-tetrahydro-(2S)-dipicolinic acid (HTPA), and that the consecutive dehydration reaction leading to DHDP is not spontaneous but catalyzed by DapB.</text>
</comment>
<feature type="chain" id="PRO_1000050271" description="4-hydroxy-tetrahydrodipicolinate synthase">
    <location>
        <begin position="1"/>
        <end position="292"/>
    </location>
</feature>
<feature type="active site" description="Proton donor/acceptor" evidence="1">
    <location>
        <position position="133"/>
    </location>
</feature>
<feature type="active site" description="Schiff-base intermediate with substrate" evidence="1">
    <location>
        <position position="161"/>
    </location>
</feature>
<feature type="binding site" evidence="1">
    <location>
        <position position="45"/>
    </location>
    <ligand>
        <name>pyruvate</name>
        <dbReference type="ChEBI" id="CHEBI:15361"/>
    </ligand>
</feature>
<feature type="binding site" evidence="1">
    <location>
        <position position="203"/>
    </location>
    <ligand>
        <name>pyruvate</name>
        <dbReference type="ChEBI" id="CHEBI:15361"/>
    </ligand>
</feature>
<feature type="site" description="Part of a proton relay during catalysis" evidence="1">
    <location>
        <position position="44"/>
    </location>
</feature>
<feature type="site" description="Part of a proton relay during catalysis" evidence="1">
    <location>
        <position position="107"/>
    </location>
</feature>
<dbReference type="EC" id="4.3.3.7" evidence="1"/>
<dbReference type="EMBL" id="CP000036">
    <property type="protein sequence ID" value="ABB67045.1"/>
    <property type="molecule type" value="Genomic_DNA"/>
</dbReference>
<dbReference type="RefSeq" id="WP_001295469.1">
    <property type="nucleotide sequence ID" value="NC_007613.1"/>
</dbReference>
<dbReference type="SMR" id="Q31Y13"/>
<dbReference type="GeneID" id="93774660"/>
<dbReference type="KEGG" id="sbo:SBO_2495"/>
<dbReference type="HOGENOM" id="CLU_049343_7_1_6"/>
<dbReference type="UniPathway" id="UPA00034">
    <property type="reaction ID" value="UER00017"/>
</dbReference>
<dbReference type="Proteomes" id="UP000007067">
    <property type="component" value="Chromosome"/>
</dbReference>
<dbReference type="GO" id="GO:0005829">
    <property type="term" value="C:cytosol"/>
    <property type="evidence" value="ECO:0007669"/>
    <property type="project" value="TreeGrafter"/>
</dbReference>
<dbReference type="GO" id="GO:0008840">
    <property type="term" value="F:4-hydroxy-tetrahydrodipicolinate synthase activity"/>
    <property type="evidence" value="ECO:0007669"/>
    <property type="project" value="UniProtKB-UniRule"/>
</dbReference>
<dbReference type="GO" id="GO:0019877">
    <property type="term" value="P:diaminopimelate biosynthetic process"/>
    <property type="evidence" value="ECO:0007669"/>
    <property type="project" value="UniProtKB-UniRule"/>
</dbReference>
<dbReference type="GO" id="GO:0009089">
    <property type="term" value="P:lysine biosynthetic process via diaminopimelate"/>
    <property type="evidence" value="ECO:0007669"/>
    <property type="project" value="UniProtKB-UniRule"/>
</dbReference>
<dbReference type="CDD" id="cd00950">
    <property type="entry name" value="DHDPS"/>
    <property type="match status" value="1"/>
</dbReference>
<dbReference type="FunFam" id="3.20.20.70:FF:000046">
    <property type="entry name" value="4-hydroxy-tetrahydrodipicolinate synthase"/>
    <property type="match status" value="1"/>
</dbReference>
<dbReference type="Gene3D" id="3.20.20.70">
    <property type="entry name" value="Aldolase class I"/>
    <property type="match status" value="1"/>
</dbReference>
<dbReference type="HAMAP" id="MF_00418">
    <property type="entry name" value="DapA"/>
    <property type="match status" value="1"/>
</dbReference>
<dbReference type="InterPro" id="IPR013785">
    <property type="entry name" value="Aldolase_TIM"/>
</dbReference>
<dbReference type="InterPro" id="IPR005263">
    <property type="entry name" value="DapA"/>
</dbReference>
<dbReference type="InterPro" id="IPR002220">
    <property type="entry name" value="DapA-like"/>
</dbReference>
<dbReference type="InterPro" id="IPR020625">
    <property type="entry name" value="Schiff_base-form_aldolases_AS"/>
</dbReference>
<dbReference type="InterPro" id="IPR020624">
    <property type="entry name" value="Schiff_base-form_aldolases_CS"/>
</dbReference>
<dbReference type="NCBIfam" id="TIGR00674">
    <property type="entry name" value="dapA"/>
    <property type="match status" value="1"/>
</dbReference>
<dbReference type="PANTHER" id="PTHR12128:SF66">
    <property type="entry name" value="4-HYDROXY-2-OXOGLUTARATE ALDOLASE, MITOCHONDRIAL"/>
    <property type="match status" value="1"/>
</dbReference>
<dbReference type="PANTHER" id="PTHR12128">
    <property type="entry name" value="DIHYDRODIPICOLINATE SYNTHASE"/>
    <property type="match status" value="1"/>
</dbReference>
<dbReference type="Pfam" id="PF00701">
    <property type="entry name" value="DHDPS"/>
    <property type="match status" value="1"/>
</dbReference>
<dbReference type="PIRSF" id="PIRSF001365">
    <property type="entry name" value="DHDPS"/>
    <property type="match status" value="1"/>
</dbReference>
<dbReference type="PRINTS" id="PR00146">
    <property type="entry name" value="DHPICSNTHASE"/>
</dbReference>
<dbReference type="SMART" id="SM01130">
    <property type="entry name" value="DHDPS"/>
    <property type="match status" value="1"/>
</dbReference>
<dbReference type="SUPFAM" id="SSF51569">
    <property type="entry name" value="Aldolase"/>
    <property type="match status" value="1"/>
</dbReference>
<dbReference type="PROSITE" id="PS00665">
    <property type="entry name" value="DHDPS_1"/>
    <property type="match status" value="1"/>
</dbReference>
<dbReference type="PROSITE" id="PS00666">
    <property type="entry name" value="DHDPS_2"/>
    <property type="match status" value="1"/>
</dbReference>
<sequence length="292" mass="31284">MFTGSIVAIVTPMDEKGNVCRASLKKLIDYHVASGTSAIVSVGTTGESATLNHDEHADVVMMTLELADGRIPVIAGTGANATAEAISLTQRFNDSGIVGCLTVTPYYNRPSQEGLYQHFKAIAEHTDLPQILYNVPSRTGCDLLPETVGRLAKVKNIIGIKEATGNLTRVNQIKELVSDDFVLLSGDDASALDFMQLGGHGVISVTANVAARDMAQMCKLAAEGHFAEARVINQRLMPLHNKLFVEPNPIPVKWACKELGLVATDTLRLPMTPITDSGRETVRAALKHAGLL</sequence>
<accession>Q31Y13</accession>
<protein>
    <recommendedName>
        <fullName evidence="1">4-hydroxy-tetrahydrodipicolinate synthase</fullName>
        <shortName evidence="1">HTPA synthase</shortName>
        <ecNumber evidence="1">4.3.3.7</ecNumber>
    </recommendedName>
</protein>